<proteinExistence type="inferred from homology"/>
<accession>A5FC71</accession>
<name>UXUA_FLAJ1</name>
<sequence length="394" mass="44363">MEQTLRWFGPNDPVSLQDIAQTGATGIVTALHHIPNGEVWSIDEIIKRKVEIEHQDGDPKKGASGLTWSVVESIPVHEDIKKQTGNYIQYIENYKESIRNLALCGIKCVCYNFMPVLDWSRTDLSYTVEDGSKALRFDINAFAAFELFILKRPGAENEYSDEQKQKAKSYFEAMTAEDKVKLQQNILAGLPGAEEAYTVEDFLVTLSAYNHIDRQALKNNLFHFLKEIVPVAESKGVLMAIHPDDPPYPILGLPRVVSTEEDLIELMNAAPSKSNGFTMCTGSYGVRADNDLPGIVRRHGDKMNFIHLRSTQRDEEGSFYEANHLEGDVDMYEVVKAILEVEKRNNSKLPMRPDHGHQMLDDLKKKTNPGYSAIGRLRGLAELRGLELGIKRSL</sequence>
<keyword id="KW-0408">Iron</keyword>
<keyword id="KW-0456">Lyase</keyword>
<keyword id="KW-0464">Manganese</keyword>
<reference key="1">
    <citation type="journal article" date="2009" name="Appl. Environ. Microbiol.">
        <title>Novel features of the polysaccharide-digesting gliding bacterium Flavobacterium johnsoniae as revealed by genome sequence analysis.</title>
        <authorList>
            <person name="McBride M.J."/>
            <person name="Xie G."/>
            <person name="Martens E.C."/>
            <person name="Lapidus A."/>
            <person name="Henrissat B."/>
            <person name="Rhodes R.G."/>
            <person name="Goltsman E."/>
            <person name="Wang W."/>
            <person name="Xu J."/>
            <person name="Hunnicutt D.W."/>
            <person name="Staroscik A.M."/>
            <person name="Hoover T.R."/>
            <person name="Cheng Y.Q."/>
            <person name="Stein J.L."/>
        </authorList>
    </citation>
    <scope>NUCLEOTIDE SEQUENCE [LARGE SCALE GENOMIC DNA]</scope>
    <source>
        <strain>ATCC 17061 / DSM 2064 / JCM 8514 / BCRC 14874 / CCUG 350202 / NBRC 14942 / NCIMB 11054 / UW101</strain>
    </source>
</reference>
<gene>
    <name evidence="1" type="primary">uxuA</name>
    <name type="ordered locus">Fjoh_4191</name>
</gene>
<comment type="function">
    <text evidence="1">Catalyzes the dehydration of D-mannonate.</text>
</comment>
<comment type="catalytic activity">
    <reaction evidence="1">
        <text>D-mannonate = 2-dehydro-3-deoxy-D-gluconate + H2O</text>
        <dbReference type="Rhea" id="RHEA:20097"/>
        <dbReference type="ChEBI" id="CHEBI:15377"/>
        <dbReference type="ChEBI" id="CHEBI:17767"/>
        <dbReference type="ChEBI" id="CHEBI:57990"/>
        <dbReference type="EC" id="4.2.1.8"/>
    </reaction>
</comment>
<comment type="cofactor">
    <cofactor evidence="1">
        <name>Fe(2+)</name>
        <dbReference type="ChEBI" id="CHEBI:29033"/>
    </cofactor>
    <cofactor evidence="1">
        <name>Mn(2+)</name>
        <dbReference type="ChEBI" id="CHEBI:29035"/>
    </cofactor>
</comment>
<comment type="pathway">
    <text evidence="1">Carbohydrate metabolism; pentose and glucuronate interconversion.</text>
</comment>
<comment type="similarity">
    <text evidence="1">Belongs to the mannonate dehydratase family.</text>
</comment>
<organism>
    <name type="scientific">Flavobacterium johnsoniae (strain ATCC 17061 / DSM 2064 / JCM 8514 / BCRC 14874 / CCUG 350202 / NBRC 14942 / NCIMB 11054 / UW101)</name>
    <name type="common">Cytophaga johnsonae</name>
    <dbReference type="NCBI Taxonomy" id="376686"/>
    <lineage>
        <taxon>Bacteria</taxon>
        <taxon>Pseudomonadati</taxon>
        <taxon>Bacteroidota</taxon>
        <taxon>Flavobacteriia</taxon>
        <taxon>Flavobacteriales</taxon>
        <taxon>Flavobacteriaceae</taxon>
        <taxon>Flavobacterium</taxon>
    </lineage>
</organism>
<evidence type="ECO:0000255" key="1">
    <source>
        <dbReference type="HAMAP-Rule" id="MF_00106"/>
    </source>
</evidence>
<dbReference type="EC" id="4.2.1.8" evidence="1"/>
<dbReference type="EMBL" id="CP000685">
    <property type="protein sequence ID" value="ABQ07199.1"/>
    <property type="molecule type" value="Genomic_DNA"/>
</dbReference>
<dbReference type="RefSeq" id="WP_012026165.1">
    <property type="nucleotide sequence ID" value="NC_009441.1"/>
</dbReference>
<dbReference type="SMR" id="A5FC71"/>
<dbReference type="STRING" id="376686.Fjoh_4191"/>
<dbReference type="KEGG" id="fjo:Fjoh_4191"/>
<dbReference type="eggNOG" id="COG1312">
    <property type="taxonomic scope" value="Bacteria"/>
</dbReference>
<dbReference type="HOGENOM" id="CLU_058621_2_0_10"/>
<dbReference type="OrthoDB" id="9780250at2"/>
<dbReference type="UniPathway" id="UPA00246"/>
<dbReference type="Proteomes" id="UP000006694">
    <property type="component" value="Chromosome"/>
</dbReference>
<dbReference type="GO" id="GO:0008198">
    <property type="term" value="F:ferrous iron binding"/>
    <property type="evidence" value="ECO:0007669"/>
    <property type="project" value="TreeGrafter"/>
</dbReference>
<dbReference type="GO" id="GO:0030145">
    <property type="term" value="F:manganese ion binding"/>
    <property type="evidence" value="ECO:0007669"/>
    <property type="project" value="TreeGrafter"/>
</dbReference>
<dbReference type="GO" id="GO:0008927">
    <property type="term" value="F:mannonate dehydratase activity"/>
    <property type="evidence" value="ECO:0007669"/>
    <property type="project" value="UniProtKB-UniRule"/>
</dbReference>
<dbReference type="GO" id="GO:0042840">
    <property type="term" value="P:D-glucuronate catabolic process"/>
    <property type="evidence" value="ECO:0007669"/>
    <property type="project" value="TreeGrafter"/>
</dbReference>
<dbReference type="Gene3D" id="3.20.20.150">
    <property type="entry name" value="Divalent-metal-dependent TIM barrel enzymes"/>
    <property type="match status" value="1"/>
</dbReference>
<dbReference type="HAMAP" id="MF_00106">
    <property type="entry name" value="UxuA"/>
    <property type="match status" value="1"/>
</dbReference>
<dbReference type="InterPro" id="IPR004628">
    <property type="entry name" value="Man_deHydtase"/>
</dbReference>
<dbReference type="InterPro" id="IPR036237">
    <property type="entry name" value="Xyl_isomerase-like_sf"/>
</dbReference>
<dbReference type="NCBIfam" id="NF003027">
    <property type="entry name" value="PRK03906.1"/>
    <property type="match status" value="1"/>
</dbReference>
<dbReference type="NCBIfam" id="TIGR00695">
    <property type="entry name" value="uxuA"/>
    <property type="match status" value="1"/>
</dbReference>
<dbReference type="PANTHER" id="PTHR30387">
    <property type="entry name" value="MANNONATE DEHYDRATASE"/>
    <property type="match status" value="1"/>
</dbReference>
<dbReference type="PANTHER" id="PTHR30387:SF2">
    <property type="entry name" value="MANNONATE DEHYDRATASE"/>
    <property type="match status" value="1"/>
</dbReference>
<dbReference type="Pfam" id="PF03786">
    <property type="entry name" value="UxuA"/>
    <property type="match status" value="1"/>
</dbReference>
<dbReference type="PIRSF" id="PIRSF016049">
    <property type="entry name" value="Man_dehyd"/>
    <property type="match status" value="1"/>
</dbReference>
<dbReference type="SUPFAM" id="SSF51658">
    <property type="entry name" value="Xylose isomerase-like"/>
    <property type="match status" value="1"/>
</dbReference>
<protein>
    <recommendedName>
        <fullName evidence="1">Mannonate dehydratase</fullName>
        <ecNumber evidence="1">4.2.1.8</ecNumber>
    </recommendedName>
    <alternativeName>
        <fullName evidence="1">D-mannonate hydro-lyase</fullName>
    </alternativeName>
</protein>
<feature type="chain" id="PRO_1000075900" description="Mannonate dehydratase">
    <location>
        <begin position="1"/>
        <end position="394"/>
    </location>
</feature>